<reference key="1">
    <citation type="journal article" date="2005" name="Nature">
        <title>The genome of the social amoeba Dictyostelium discoideum.</title>
        <authorList>
            <person name="Eichinger L."/>
            <person name="Pachebat J.A."/>
            <person name="Gloeckner G."/>
            <person name="Rajandream M.A."/>
            <person name="Sucgang R."/>
            <person name="Berriman M."/>
            <person name="Song J."/>
            <person name="Olsen R."/>
            <person name="Szafranski K."/>
            <person name="Xu Q."/>
            <person name="Tunggal B."/>
            <person name="Kummerfeld S."/>
            <person name="Madera M."/>
            <person name="Konfortov B.A."/>
            <person name="Rivero F."/>
            <person name="Bankier A.T."/>
            <person name="Lehmann R."/>
            <person name="Hamlin N."/>
            <person name="Davies R."/>
            <person name="Gaudet P."/>
            <person name="Fey P."/>
            <person name="Pilcher K."/>
            <person name="Chen G."/>
            <person name="Saunders D."/>
            <person name="Sodergren E.J."/>
            <person name="Davis P."/>
            <person name="Kerhornou A."/>
            <person name="Nie X."/>
            <person name="Hall N."/>
            <person name="Anjard C."/>
            <person name="Hemphill L."/>
            <person name="Bason N."/>
            <person name="Farbrother P."/>
            <person name="Desany B."/>
            <person name="Just E."/>
            <person name="Morio T."/>
            <person name="Rost R."/>
            <person name="Churcher C.M."/>
            <person name="Cooper J."/>
            <person name="Haydock S."/>
            <person name="van Driessche N."/>
            <person name="Cronin A."/>
            <person name="Goodhead I."/>
            <person name="Muzny D.M."/>
            <person name="Mourier T."/>
            <person name="Pain A."/>
            <person name="Lu M."/>
            <person name="Harper D."/>
            <person name="Lindsay R."/>
            <person name="Hauser H."/>
            <person name="James K.D."/>
            <person name="Quiles M."/>
            <person name="Madan Babu M."/>
            <person name="Saito T."/>
            <person name="Buchrieser C."/>
            <person name="Wardroper A."/>
            <person name="Felder M."/>
            <person name="Thangavelu M."/>
            <person name="Johnson D."/>
            <person name="Knights A."/>
            <person name="Loulseged H."/>
            <person name="Mungall K.L."/>
            <person name="Oliver K."/>
            <person name="Price C."/>
            <person name="Quail M.A."/>
            <person name="Urushihara H."/>
            <person name="Hernandez J."/>
            <person name="Rabbinowitsch E."/>
            <person name="Steffen D."/>
            <person name="Sanders M."/>
            <person name="Ma J."/>
            <person name="Kohara Y."/>
            <person name="Sharp S."/>
            <person name="Simmonds M.N."/>
            <person name="Spiegler S."/>
            <person name="Tivey A."/>
            <person name="Sugano S."/>
            <person name="White B."/>
            <person name="Walker D."/>
            <person name="Woodward J.R."/>
            <person name="Winckler T."/>
            <person name="Tanaka Y."/>
            <person name="Shaulsky G."/>
            <person name="Schleicher M."/>
            <person name="Weinstock G.M."/>
            <person name="Rosenthal A."/>
            <person name="Cox E.C."/>
            <person name="Chisholm R.L."/>
            <person name="Gibbs R.A."/>
            <person name="Loomis W.F."/>
            <person name="Platzer M."/>
            <person name="Kay R.R."/>
            <person name="Williams J.G."/>
            <person name="Dear P.H."/>
            <person name="Noegel A.A."/>
            <person name="Barrell B.G."/>
            <person name="Kuspa A."/>
        </authorList>
    </citation>
    <scope>NUCLEOTIDE SEQUENCE [LARGE SCALE GENOMIC DNA]</scope>
    <source>
        <strain>AX4</strain>
    </source>
</reference>
<organism>
    <name type="scientific">Dictyostelium discoideum</name>
    <name type="common">Social amoeba</name>
    <dbReference type="NCBI Taxonomy" id="44689"/>
    <lineage>
        <taxon>Eukaryota</taxon>
        <taxon>Amoebozoa</taxon>
        <taxon>Evosea</taxon>
        <taxon>Eumycetozoa</taxon>
        <taxon>Dictyostelia</taxon>
        <taxon>Dictyosteliales</taxon>
        <taxon>Dictyosteliaceae</taxon>
        <taxon>Dictyostelium</taxon>
    </lineage>
</organism>
<comment type="function">
    <text evidence="1">Catalyzes the oxidation of hydrogen sulfide, with the help of a quinone.</text>
</comment>
<comment type="catalytic activity">
    <reaction evidence="1">
        <text>ubiquinone-10 + hydrogen sulfide + sulfite + 2 H(+) = ubiquinol-10 + thiosulfate</text>
        <dbReference type="Rhea" id="RHEA:38359"/>
        <dbReference type="ChEBI" id="CHEBI:15378"/>
        <dbReference type="ChEBI" id="CHEBI:17359"/>
        <dbReference type="ChEBI" id="CHEBI:29919"/>
        <dbReference type="ChEBI" id="CHEBI:33542"/>
        <dbReference type="ChEBI" id="CHEBI:46245"/>
        <dbReference type="ChEBI" id="CHEBI:64183"/>
    </reaction>
</comment>
<comment type="catalytic activity">
    <reaction evidence="1">
        <text>a quinone + hydrogen sulfide + glutathione + H(+) = S-sulfanylglutathione + a quinol</text>
        <dbReference type="Rhea" id="RHEA:55156"/>
        <dbReference type="ChEBI" id="CHEBI:15378"/>
        <dbReference type="ChEBI" id="CHEBI:24646"/>
        <dbReference type="ChEBI" id="CHEBI:29919"/>
        <dbReference type="ChEBI" id="CHEBI:57925"/>
        <dbReference type="ChEBI" id="CHEBI:58905"/>
        <dbReference type="ChEBI" id="CHEBI:132124"/>
        <dbReference type="EC" id="1.8.5.8"/>
    </reaction>
</comment>
<comment type="cofactor">
    <cofactor evidence="1">
        <name>FAD</name>
        <dbReference type="ChEBI" id="CHEBI:57692"/>
    </cofactor>
    <text evidence="1">Binds 1 FAD per subunit.</text>
</comment>
<comment type="subcellular location">
    <subcellularLocation>
        <location evidence="1">Mitochondrion</location>
    </subcellularLocation>
</comment>
<comment type="similarity">
    <text evidence="3">Belongs to the SQRD family.</text>
</comment>
<gene>
    <name evidence="1" type="primary">sqor</name>
    <name evidence="1" type="synonym">sqrdl</name>
    <name type="ORF">DDB_G0292250</name>
</gene>
<name>SQOR_DICDI</name>
<sequence>MFKSIMYALAVAPAVTSSSDKLPNGVVSASQLGSEKEKRKLKNVTKIVIVGGGAGGLSVASQLEHKFKNKGDIVIVEPSEKHYYQPLWTLVGGGIFSRKDSEKDEKDFIPKGATWVKDSVTVFKPEENIVLTKDGKEIDYDYLVVSTGLELYWDRVKGLKENLGKNGVTSNYSYDSCEKTFEFIKSLKPGNVAIFTVPTTGVKCGGAPQKILWLCDDYLRKHGIRDKVRLDFNSAGASMFPVKKYSEVLDKMAKERGVNQNFAHNLVEIKGDSKEAVFETPQGNKTVKYDMIHVVPPMGPHSVIKNSPLADPATGFVNVDKGTLQHVKYDNVFSLGDTSNLPTSKTAAAITSQAPILVGNLINHKLGLPLNHKYDGYTSCPITTSYSKIILAEFKYGFEVDESLPFDQSKESYFPMFLKKYVFPTAYWEGMLKGRWFGKNTLFNPIKTPEIN</sequence>
<accession>Q54DK1</accession>
<evidence type="ECO:0000250" key="1">
    <source>
        <dbReference type="UniProtKB" id="Q9Y6N5"/>
    </source>
</evidence>
<evidence type="ECO:0000255" key="2"/>
<evidence type="ECO:0000305" key="3"/>
<dbReference type="EC" id="1.8.5.8" evidence="1"/>
<dbReference type="EMBL" id="AAFI02000188">
    <property type="protein sequence ID" value="EAL61335.1"/>
    <property type="molecule type" value="Genomic_DNA"/>
</dbReference>
<dbReference type="RefSeq" id="XP_629726.1">
    <property type="nucleotide sequence ID" value="XM_629724.1"/>
</dbReference>
<dbReference type="SMR" id="Q54DK1"/>
<dbReference type="FunCoup" id="Q54DK1">
    <property type="interactions" value="138"/>
</dbReference>
<dbReference type="STRING" id="44689.Q54DK1"/>
<dbReference type="PaxDb" id="44689-DDB0252562"/>
<dbReference type="EnsemblProtists" id="EAL61335">
    <property type="protein sequence ID" value="EAL61335"/>
    <property type="gene ID" value="DDB_G0292250"/>
</dbReference>
<dbReference type="GeneID" id="8628554"/>
<dbReference type="KEGG" id="ddi:DDB_G0292250"/>
<dbReference type="dictyBase" id="DDB_G0292250">
    <property type="gene designation" value="sqrdl"/>
</dbReference>
<dbReference type="VEuPathDB" id="AmoebaDB:DDB_G0292250"/>
<dbReference type="eggNOG" id="KOG3851">
    <property type="taxonomic scope" value="Eukaryota"/>
</dbReference>
<dbReference type="HOGENOM" id="CLU_030742_2_0_1"/>
<dbReference type="InParanoid" id="Q54DK1"/>
<dbReference type="OMA" id="ERYSMFI"/>
<dbReference type="PhylomeDB" id="Q54DK1"/>
<dbReference type="PRO" id="PR:Q54DK1"/>
<dbReference type="Proteomes" id="UP000002195">
    <property type="component" value="Chromosome 6"/>
</dbReference>
<dbReference type="GO" id="GO:0005739">
    <property type="term" value="C:mitochondrion"/>
    <property type="evidence" value="ECO:0000250"/>
    <property type="project" value="dictyBase"/>
</dbReference>
<dbReference type="GO" id="GO:0071949">
    <property type="term" value="F:FAD binding"/>
    <property type="evidence" value="ECO:0000318"/>
    <property type="project" value="GO_Central"/>
</dbReference>
<dbReference type="GO" id="GO:0106436">
    <property type="term" value="F:glutathione-dependent sulfide quinone oxidoreductase activity"/>
    <property type="evidence" value="ECO:0007669"/>
    <property type="project" value="UniProtKB-EC"/>
</dbReference>
<dbReference type="GO" id="GO:0048038">
    <property type="term" value="F:quinone binding"/>
    <property type="evidence" value="ECO:0007669"/>
    <property type="project" value="UniProtKB-KW"/>
</dbReference>
<dbReference type="GO" id="GO:0070224">
    <property type="term" value="F:sulfide:quinone oxidoreductase activity"/>
    <property type="evidence" value="ECO:0000318"/>
    <property type="project" value="GO_Central"/>
</dbReference>
<dbReference type="GO" id="GO:0042762">
    <property type="term" value="P:regulation of sulfur metabolic process"/>
    <property type="evidence" value="ECO:0000250"/>
    <property type="project" value="dictyBase"/>
</dbReference>
<dbReference type="GO" id="GO:0070221">
    <property type="term" value="P:sulfide oxidation, using sulfide:quinone oxidoreductase"/>
    <property type="evidence" value="ECO:0000318"/>
    <property type="project" value="GO_Central"/>
</dbReference>
<dbReference type="FunFam" id="3.50.50.60:FF:000034">
    <property type="entry name" value="sulfide:quinone oxidoreductase, mitochondrial"/>
    <property type="match status" value="1"/>
</dbReference>
<dbReference type="Gene3D" id="3.50.50.60">
    <property type="entry name" value="FAD/NAD(P)-binding domain"/>
    <property type="match status" value="2"/>
</dbReference>
<dbReference type="InterPro" id="IPR036188">
    <property type="entry name" value="FAD/NAD-bd_sf"/>
</dbReference>
<dbReference type="InterPro" id="IPR023753">
    <property type="entry name" value="FAD/NAD-binding_dom"/>
</dbReference>
<dbReference type="InterPro" id="IPR015904">
    <property type="entry name" value="Sulphide_quinone_reductase"/>
</dbReference>
<dbReference type="PANTHER" id="PTHR10632">
    <property type="entry name" value="SULFIDE:QUINONE OXIDOREDUCTASE"/>
    <property type="match status" value="1"/>
</dbReference>
<dbReference type="PANTHER" id="PTHR10632:SF2">
    <property type="entry name" value="SULFIDE:QUINONE OXIDOREDUCTASE, MITOCHONDRIAL"/>
    <property type="match status" value="1"/>
</dbReference>
<dbReference type="Pfam" id="PF07992">
    <property type="entry name" value="Pyr_redox_2"/>
    <property type="match status" value="1"/>
</dbReference>
<dbReference type="SUPFAM" id="SSF51905">
    <property type="entry name" value="FAD/NAD(P)-binding domain"/>
    <property type="match status" value="2"/>
</dbReference>
<keyword id="KW-1015">Disulfide bond</keyword>
<keyword id="KW-0274">FAD</keyword>
<keyword id="KW-0285">Flavoprotein</keyword>
<keyword id="KW-0496">Mitochondrion</keyword>
<keyword id="KW-0560">Oxidoreductase</keyword>
<keyword id="KW-0874">Quinone</keyword>
<keyword id="KW-1185">Reference proteome</keyword>
<keyword id="KW-0809">Transit peptide</keyword>
<protein>
    <recommendedName>
        <fullName evidence="1">Sulfide:quinone oxidoreductase, mitochondrial</fullName>
        <ecNumber evidence="1">1.8.5.8</ecNumber>
    </recommendedName>
</protein>
<proteinExistence type="inferred from homology"/>
<feature type="transit peptide" description="Mitochondrion" evidence="2">
    <location>
        <begin position="1"/>
        <end status="unknown"/>
    </location>
</feature>
<feature type="chain" id="PRO_0000328203" description="Sulfide:quinone oxidoreductase, mitochondrial">
    <location>
        <begin status="unknown"/>
        <end position="452"/>
    </location>
</feature>
<feature type="active site" description="Cysteine persulfide intermediate" evidence="1">
    <location>
        <position position="204"/>
    </location>
</feature>
<feature type="active site" description="Cysteine persulfide intermediate" evidence="1">
    <location>
        <position position="380"/>
    </location>
</feature>
<feature type="binding site" evidence="1">
    <location>
        <begin position="54"/>
        <end position="55"/>
    </location>
    <ligand>
        <name>FAD</name>
        <dbReference type="ChEBI" id="CHEBI:57692"/>
    </ligand>
</feature>
<feature type="binding site" evidence="1">
    <location>
        <position position="77"/>
    </location>
    <ligand>
        <name>FAD</name>
        <dbReference type="ChEBI" id="CHEBI:57692"/>
    </ligand>
</feature>
<feature type="binding site" evidence="1">
    <location>
        <position position="85"/>
    </location>
    <ligand>
        <name>FAD</name>
        <dbReference type="ChEBI" id="CHEBI:57692"/>
    </ligand>
</feature>
<feature type="binding site" evidence="1">
    <location>
        <position position="120"/>
    </location>
    <ligand>
        <name>FAD</name>
        <dbReference type="ChEBI" id="CHEBI:57692"/>
    </ligand>
</feature>
<feature type="binding site" evidence="1">
    <location>
        <position position="337"/>
    </location>
    <ligand>
        <name>FAD</name>
        <dbReference type="ChEBI" id="CHEBI:57692"/>
    </ligand>
</feature>
<feature type="binding site" evidence="1">
    <location>
        <begin position="345"/>
        <end position="348"/>
    </location>
    <ligand>
        <name>FAD</name>
        <dbReference type="ChEBI" id="CHEBI:57692"/>
    </ligand>
</feature>
<feature type="disulfide bond" evidence="1">
    <location>
        <begin position="204"/>
        <end position="380"/>
    </location>
</feature>